<dbReference type="EMBL" id="CP000057">
    <property type="protein sequence ID" value="AAX87887.1"/>
    <property type="molecule type" value="Genomic_DNA"/>
</dbReference>
<dbReference type="RefSeq" id="WP_005625990.1">
    <property type="nucleotide sequence ID" value="NC_007146.2"/>
</dbReference>
<dbReference type="SMR" id="Q4QM60"/>
<dbReference type="KEGG" id="hit:NTHI1007"/>
<dbReference type="HOGENOM" id="CLU_175457_0_0_6"/>
<dbReference type="Proteomes" id="UP000002525">
    <property type="component" value="Chromosome"/>
</dbReference>
<dbReference type="Gene3D" id="1.10.3390.10">
    <property type="entry name" value="YejL-like"/>
    <property type="match status" value="1"/>
</dbReference>
<dbReference type="HAMAP" id="MF_00816">
    <property type="entry name" value="UPF0352"/>
    <property type="match status" value="1"/>
</dbReference>
<dbReference type="InterPro" id="IPR009857">
    <property type="entry name" value="UPF0352"/>
</dbReference>
<dbReference type="InterPro" id="IPR023202">
    <property type="entry name" value="YejL_sf"/>
</dbReference>
<dbReference type="NCBIfam" id="NF010242">
    <property type="entry name" value="PRK13689.1"/>
    <property type="match status" value="1"/>
</dbReference>
<dbReference type="Pfam" id="PF07208">
    <property type="entry name" value="DUF1414"/>
    <property type="match status" value="1"/>
</dbReference>
<dbReference type="PIRSF" id="PIRSF006188">
    <property type="entry name" value="UCP006188"/>
    <property type="match status" value="1"/>
</dbReference>
<dbReference type="SUPFAM" id="SSF158651">
    <property type="entry name" value="YejL-like"/>
    <property type="match status" value="1"/>
</dbReference>
<sequence>MAQHSKYSDAQLSAIVNDMIAVLEKHKAPVDLSLIALGNMASNLLTTSVPQTQREALAQAFSNSLINAVKTR</sequence>
<evidence type="ECO:0000255" key="1">
    <source>
        <dbReference type="HAMAP-Rule" id="MF_00816"/>
    </source>
</evidence>
<accession>Q4QM60</accession>
<feature type="chain" id="PRO_0000201790" description="UPF0352 protein NTHI1007">
    <location>
        <begin position="1"/>
        <end position="72"/>
    </location>
</feature>
<proteinExistence type="inferred from homology"/>
<comment type="similarity">
    <text evidence="1">Belongs to the UPF0352 family.</text>
</comment>
<gene>
    <name type="ordered locus">NTHI1007</name>
</gene>
<name>Y1007_HAEI8</name>
<organism>
    <name type="scientific">Haemophilus influenzae (strain 86-028NP)</name>
    <dbReference type="NCBI Taxonomy" id="281310"/>
    <lineage>
        <taxon>Bacteria</taxon>
        <taxon>Pseudomonadati</taxon>
        <taxon>Pseudomonadota</taxon>
        <taxon>Gammaproteobacteria</taxon>
        <taxon>Pasteurellales</taxon>
        <taxon>Pasteurellaceae</taxon>
        <taxon>Haemophilus</taxon>
    </lineage>
</organism>
<protein>
    <recommendedName>
        <fullName evidence="1">UPF0352 protein NTHI1007</fullName>
    </recommendedName>
</protein>
<reference key="1">
    <citation type="journal article" date="2005" name="J. Bacteriol.">
        <title>Genomic sequence of an otitis media isolate of nontypeable Haemophilus influenzae: comparative study with H. influenzae serotype d, strain KW20.</title>
        <authorList>
            <person name="Harrison A."/>
            <person name="Dyer D.W."/>
            <person name="Gillaspy A."/>
            <person name="Ray W.C."/>
            <person name="Mungur R."/>
            <person name="Carson M.B."/>
            <person name="Zhong H."/>
            <person name="Gipson J."/>
            <person name="Gipson M."/>
            <person name="Johnson L.S."/>
            <person name="Lewis L."/>
            <person name="Bakaletz L.O."/>
            <person name="Munson R.S. Jr."/>
        </authorList>
    </citation>
    <scope>NUCLEOTIDE SEQUENCE [LARGE SCALE GENOMIC DNA]</scope>
    <source>
        <strain>86-028NP</strain>
    </source>
</reference>